<organism>
    <name type="scientific">Treponema pallidum subsp. pallidum (strain SS14)</name>
    <dbReference type="NCBI Taxonomy" id="455434"/>
    <lineage>
        <taxon>Bacteria</taxon>
        <taxon>Pseudomonadati</taxon>
        <taxon>Spirochaetota</taxon>
        <taxon>Spirochaetia</taxon>
        <taxon>Spirochaetales</taxon>
        <taxon>Treponemataceae</taxon>
        <taxon>Treponema</taxon>
    </lineage>
</organism>
<accession>B2S4I3</accession>
<gene>
    <name evidence="1" type="primary">rsmG</name>
    <name type="ordered locus">TPASS_0946</name>
</gene>
<evidence type="ECO:0000255" key="1">
    <source>
        <dbReference type="HAMAP-Rule" id="MF_00074"/>
    </source>
</evidence>
<dbReference type="EC" id="2.1.1.-" evidence="1"/>
<dbReference type="EMBL" id="CP000805">
    <property type="protein sequence ID" value="ACD71362.1"/>
    <property type="molecule type" value="Genomic_DNA"/>
</dbReference>
<dbReference type="RefSeq" id="WP_010882389.1">
    <property type="nucleotide sequence ID" value="NC_021508.1"/>
</dbReference>
<dbReference type="SMR" id="B2S4I3"/>
<dbReference type="GeneID" id="93876694"/>
<dbReference type="KEGG" id="tpp:TPASS_0946"/>
<dbReference type="PATRIC" id="fig|455434.6.peg.932"/>
<dbReference type="Proteomes" id="UP000001202">
    <property type="component" value="Chromosome"/>
</dbReference>
<dbReference type="GO" id="GO:0005829">
    <property type="term" value="C:cytosol"/>
    <property type="evidence" value="ECO:0007669"/>
    <property type="project" value="TreeGrafter"/>
</dbReference>
<dbReference type="GO" id="GO:0070043">
    <property type="term" value="F:rRNA (guanine-N7-)-methyltransferase activity"/>
    <property type="evidence" value="ECO:0007669"/>
    <property type="project" value="UniProtKB-UniRule"/>
</dbReference>
<dbReference type="CDD" id="cd02440">
    <property type="entry name" value="AdoMet_MTases"/>
    <property type="match status" value="1"/>
</dbReference>
<dbReference type="Gene3D" id="3.40.50.150">
    <property type="entry name" value="Vaccinia Virus protein VP39"/>
    <property type="match status" value="1"/>
</dbReference>
<dbReference type="HAMAP" id="MF_00074">
    <property type="entry name" value="16SrRNA_methyltr_G"/>
    <property type="match status" value="1"/>
</dbReference>
<dbReference type="InterPro" id="IPR003682">
    <property type="entry name" value="rRNA_ssu_MeTfrase_G"/>
</dbReference>
<dbReference type="InterPro" id="IPR029063">
    <property type="entry name" value="SAM-dependent_MTases_sf"/>
</dbReference>
<dbReference type="NCBIfam" id="TIGR00138">
    <property type="entry name" value="rsmG_gidB"/>
    <property type="match status" value="1"/>
</dbReference>
<dbReference type="PANTHER" id="PTHR31760">
    <property type="entry name" value="S-ADENOSYL-L-METHIONINE-DEPENDENT METHYLTRANSFERASES SUPERFAMILY PROTEIN"/>
    <property type="match status" value="1"/>
</dbReference>
<dbReference type="PANTHER" id="PTHR31760:SF0">
    <property type="entry name" value="S-ADENOSYL-L-METHIONINE-DEPENDENT METHYLTRANSFERASES SUPERFAMILY PROTEIN"/>
    <property type="match status" value="1"/>
</dbReference>
<dbReference type="Pfam" id="PF02527">
    <property type="entry name" value="GidB"/>
    <property type="match status" value="1"/>
</dbReference>
<dbReference type="PIRSF" id="PIRSF003078">
    <property type="entry name" value="GidB"/>
    <property type="match status" value="1"/>
</dbReference>
<dbReference type="SUPFAM" id="SSF53335">
    <property type="entry name" value="S-adenosyl-L-methionine-dependent methyltransferases"/>
    <property type="match status" value="1"/>
</dbReference>
<protein>
    <recommendedName>
        <fullName evidence="1">Ribosomal RNA small subunit methyltransferase G</fullName>
        <ecNumber evidence="1">2.1.1.-</ecNumber>
    </recommendedName>
    <alternativeName>
        <fullName evidence="1">16S rRNA 7-methylguanosine methyltransferase</fullName>
        <shortName evidence="1">16S rRNA m7G methyltransferase</shortName>
    </alternativeName>
</protein>
<feature type="chain" id="PRO_1000092659" description="Ribosomal RNA small subunit methyltransferase G">
    <location>
        <begin position="1"/>
        <end position="222"/>
    </location>
</feature>
<feature type="binding site" evidence="1">
    <location>
        <position position="80"/>
    </location>
    <ligand>
        <name>S-adenosyl-L-methionine</name>
        <dbReference type="ChEBI" id="CHEBI:59789"/>
    </ligand>
</feature>
<feature type="binding site" evidence="1">
    <location>
        <position position="85"/>
    </location>
    <ligand>
        <name>S-adenosyl-L-methionine</name>
        <dbReference type="ChEBI" id="CHEBI:59789"/>
    </ligand>
</feature>
<feature type="binding site" evidence="1">
    <location>
        <position position="149"/>
    </location>
    <ligand>
        <name>S-adenosyl-L-methionine</name>
        <dbReference type="ChEBI" id="CHEBI:59789"/>
    </ligand>
</feature>
<comment type="function">
    <text evidence="1">Specifically methylates the N7 position of a guanine in 16S rRNA.</text>
</comment>
<comment type="subcellular location">
    <subcellularLocation>
        <location evidence="1">Cytoplasm</location>
    </subcellularLocation>
</comment>
<comment type="similarity">
    <text evidence="1">Belongs to the methyltransferase superfamily. RNA methyltransferase RsmG family.</text>
</comment>
<name>RSMG_TREPS</name>
<proteinExistence type="inferred from homology"/>
<reference key="1">
    <citation type="journal article" date="2008" name="BMC Microbiol.">
        <title>Complete genome sequence of Treponema pallidum ssp. pallidum strain SS14 determined with oligonucleotide arrays.</title>
        <authorList>
            <person name="Matejkova P."/>
            <person name="Strouhal M."/>
            <person name="Smajs D."/>
            <person name="Norris S.J."/>
            <person name="Palzkill T."/>
            <person name="Petrosino J.F."/>
            <person name="Sodergren E."/>
            <person name="Norton J.E."/>
            <person name="Singh J."/>
            <person name="Richmond T.A."/>
            <person name="Molla M.N."/>
            <person name="Albert T.J."/>
            <person name="Weinstock G.M."/>
        </authorList>
    </citation>
    <scope>NUCLEOTIDE SEQUENCE [LARGE SCALE GENOMIC DNA]</scope>
    <source>
        <strain>SS14</strain>
    </source>
</reference>
<sequence>MVTPSQHALLAEGVAHLTDARTAPALCALLKQYLEELILFNTRAHLVHVTHTEELITHHLLDSLSAWPHFTNARAIADIGSGAGLPGIPLACALALYAPETELTLIERREKRIAFLENACARLALPHLRIVHADAHDLTPYTYDAITFRALCPLNHPTVYMLLNKLRPGGVILAYKGKRKLIEQETRDFLPQSCSVFPLHVPFLHEARHLVAIHTPCAAPPQ</sequence>
<keyword id="KW-0963">Cytoplasm</keyword>
<keyword id="KW-0489">Methyltransferase</keyword>
<keyword id="KW-0698">rRNA processing</keyword>
<keyword id="KW-0949">S-adenosyl-L-methionine</keyword>
<keyword id="KW-0808">Transferase</keyword>